<dbReference type="EC" id="2.5.1.19" evidence="1"/>
<dbReference type="EMBL" id="CP000100">
    <property type="protein sequence ID" value="ABB56264.1"/>
    <property type="molecule type" value="Genomic_DNA"/>
</dbReference>
<dbReference type="RefSeq" id="WP_011243593.1">
    <property type="nucleotide sequence ID" value="NZ_JACJTX010000002.1"/>
</dbReference>
<dbReference type="SMR" id="Q31RQ5"/>
<dbReference type="STRING" id="1140.Synpcc7942_0232"/>
<dbReference type="PaxDb" id="1140-Synpcc7942_0232"/>
<dbReference type="GeneID" id="72429046"/>
<dbReference type="KEGG" id="syf:Synpcc7942_0232"/>
<dbReference type="eggNOG" id="COG0128">
    <property type="taxonomic scope" value="Bacteria"/>
</dbReference>
<dbReference type="HOGENOM" id="CLU_024321_0_1_3"/>
<dbReference type="OrthoDB" id="9809920at2"/>
<dbReference type="BioCyc" id="SYNEL:SYNPCC7942_0232-MONOMER"/>
<dbReference type="BRENDA" id="2.5.1.19">
    <property type="organism ID" value="7781"/>
</dbReference>
<dbReference type="UniPathway" id="UPA00053">
    <property type="reaction ID" value="UER00089"/>
</dbReference>
<dbReference type="Proteomes" id="UP000889800">
    <property type="component" value="Chromosome"/>
</dbReference>
<dbReference type="GO" id="GO:0005737">
    <property type="term" value="C:cytoplasm"/>
    <property type="evidence" value="ECO:0007669"/>
    <property type="project" value="UniProtKB-SubCell"/>
</dbReference>
<dbReference type="GO" id="GO:0003866">
    <property type="term" value="F:3-phosphoshikimate 1-carboxyvinyltransferase activity"/>
    <property type="evidence" value="ECO:0007669"/>
    <property type="project" value="UniProtKB-UniRule"/>
</dbReference>
<dbReference type="GO" id="GO:0008652">
    <property type="term" value="P:amino acid biosynthetic process"/>
    <property type="evidence" value="ECO:0007669"/>
    <property type="project" value="UniProtKB-KW"/>
</dbReference>
<dbReference type="GO" id="GO:0009073">
    <property type="term" value="P:aromatic amino acid family biosynthetic process"/>
    <property type="evidence" value="ECO:0007669"/>
    <property type="project" value="UniProtKB-KW"/>
</dbReference>
<dbReference type="GO" id="GO:0009423">
    <property type="term" value="P:chorismate biosynthetic process"/>
    <property type="evidence" value="ECO:0007669"/>
    <property type="project" value="UniProtKB-UniRule"/>
</dbReference>
<dbReference type="CDD" id="cd01556">
    <property type="entry name" value="EPSP_synthase"/>
    <property type="match status" value="1"/>
</dbReference>
<dbReference type="FunFam" id="3.65.10.10:FF:000006">
    <property type="entry name" value="3-phosphoshikimate 1-carboxyvinyltransferase"/>
    <property type="match status" value="1"/>
</dbReference>
<dbReference type="Gene3D" id="3.65.10.10">
    <property type="entry name" value="Enolpyruvate transferase domain"/>
    <property type="match status" value="2"/>
</dbReference>
<dbReference type="HAMAP" id="MF_00210">
    <property type="entry name" value="EPSP_synth"/>
    <property type="match status" value="1"/>
</dbReference>
<dbReference type="InterPro" id="IPR001986">
    <property type="entry name" value="Enolpyruvate_Tfrase_dom"/>
</dbReference>
<dbReference type="InterPro" id="IPR036968">
    <property type="entry name" value="Enolpyruvate_Tfrase_sf"/>
</dbReference>
<dbReference type="InterPro" id="IPR006264">
    <property type="entry name" value="EPSP_synthase"/>
</dbReference>
<dbReference type="InterPro" id="IPR023193">
    <property type="entry name" value="EPSP_synthase_CS"/>
</dbReference>
<dbReference type="InterPro" id="IPR013792">
    <property type="entry name" value="RNA3'P_cycl/enolpyr_Trfase_a/b"/>
</dbReference>
<dbReference type="NCBIfam" id="TIGR01356">
    <property type="entry name" value="aroA"/>
    <property type="match status" value="1"/>
</dbReference>
<dbReference type="PANTHER" id="PTHR21090">
    <property type="entry name" value="AROM/DEHYDROQUINATE SYNTHASE"/>
    <property type="match status" value="1"/>
</dbReference>
<dbReference type="PANTHER" id="PTHR21090:SF5">
    <property type="entry name" value="PENTAFUNCTIONAL AROM POLYPEPTIDE"/>
    <property type="match status" value="1"/>
</dbReference>
<dbReference type="Pfam" id="PF00275">
    <property type="entry name" value="EPSP_synthase"/>
    <property type="match status" value="1"/>
</dbReference>
<dbReference type="PIRSF" id="PIRSF000505">
    <property type="entry name" value="EPSPS"/>
    <property type="match status" value="1"/>
</dbReference>
<dbReference type="SUPFAM" id="SSF55205">
    <property type="entry name" value="EPT/RTPC-like"/>
    <property type="match status" value="1"/>
</dbReference>
<dbReference type="PROSITE" id="PS00104">
    <property type="entry name" value="EPSP_SYNTHASE_1"/>
    <property type="match status" value="1"/>
</dbReference>
<dbReference type="PROSITE" id="PS00885">
    <property type="entry name" value="EPSP_SYNTHASE_2"/>
    <property type="match status" value="1"/>
</dbReference>
<sequence>MAQPFVLLPTEDSHQTLRIQPPSTGIGLRGRIRVPGDKSISHRALMLGAIASGETTIEGLLLGEDPLSTAACFRAMGAEISELNSELVRVKGIGLQNLQEPLDVLNAGNSGTTIRLMMGLLAGQRDRFFCVTGDESLRSRPMARVIQPLSQMGAEIRGRQGNTRAPLAISGRSLQPIRYVSPIASAQVKSSILLAGLTCEGQTTVVEPALSRDHSERMFRAFGAKLTVNPEEISVTVEGPAELTGQPVVVPGDISSAAFWLVAAAIVPDSDLLIENVGVNPTRTGILEALQQMEAQITLENERIVAGEPVADLRVRSSNLQAIEIGGSLIPRLIDEVPILAVAAAFAKGTTIIRDAEELRVKESDRIAVMASELGRMGATISERPDGLEITGGAALTGATVDSYTDHRIAMSLAIAALQAKGQTQIQQAEAAAVSYPDFVPTLQQLLG</sequence>
<name>AROA_SYNE7</name>
<evidence type="ECO:0000255" key="1">
    <source>
        <dbReference type="HAMAP-Rule" id="MF_00210"/>
    </source>
</evidence>
<organism>
    <name type="scientific">Synechococcus elongatus (strain ATCC 33912 / PCC 7942 / FACHB-805)</name>
    <name type="common">Anacystis nidulans R2</name>
    <dbReference type="NCBI Taxonomy" id="1140"/>
    <lineage>
        <taxon>Bacteria</taxon>
        <taxon>Bacillati</taxon>
        <taxon>Cyanobacteriota</taxon>
        <taxon>Cyanophyceae</taxon>
        <taxon>Synechococcales</taxon>
        <taxon>Synechococcaceae</taxon>
        <taxon>Synechococcus</taxon>
    </lineage>
</organism>
<proteinExistence type="inferred from homology"/>
<accession>Q31RQ5</accession>
<reference key="1">
    <citation type="submission" date="2005-08" db="EMBL/GenBank/DDBJ databases">
        <title>Complete sequence of chromosome 1 of Synechococcus elongatus PCC 7942.</title>
        <authorList>
            <consortium name="US DOE Joint Genome Institute"/>
            <person name="Copeland A."/>
            <person name="Lucas S."/>
            <person name="Lapidus A."/>
            <person name="Barry K."/>
            <person name="Detter J.C."/>
            <person name="Glavina T."/>
            <person name="Hammon N."/>
            <person name="Israni S."/>
            <person name="Pitluck S."/>
            <person name="Schmutz J."/>
            <person name="Larimer F."/>
            <person name="Land M."/>
            <person name="Kyrpides N."/>
            <person name="Lykidis A."/>
            <person name="Golden S."/>
            <person name="Richardson P."/>
        </authorList>
    </citation>
    <scope>NUCLEOTIDE SEQUENCE [LARGE SCALE GENOMIC DNA]</scope>
    <source>
        <strain>ATCC 33912 / PCC 7942 / FACHB-805</strain>
    </source>
</reference>
<comment type="function">
    <text evidence="1">Catalyzes the transfer of the enolpyruvyl moiety of phosphoenolpyruvate (PEP) to the 5-hydroxyl of shikimate-3-phosphate (S3P) to produce enolpyruvyl shikimate-3-phosphate and inorganic phosphate.</text>
</comment>
<comment type="catalytic activity">
    <reaction evidence="1">
        <text>3-phosphoshikimate + phosphoenolpyruvate = 5-O-(1-carboxyvinyl)-3-phosphoshikimate + phosphate</text>
        <dbReference type="Rhea" id="RHEA:21256"/>
        <dbReference type="ChEBI" id="CHEBI:43474"/>
        <dbReference type="ChEBI" id="CHEBI:57701"/>
        <dbReference type="ChEBI" id="CHEBI:58702"/>
        <dbReference type="ChEBI" id="CHEBI:145989"/>
        <dbReference type="EC" id="2.5.1.19"/>
    </reaction>
    <physiologicalReaction direction="left-to-right" evidence="1">
        <dbReference type="Rhea" id="RHEA:21257"/>
    </physiologicalReaction>
</comment>
<comment type="pathway">
    <text evidence="1">Metabolic intermediate biosynthesis; chorismate biosynthesis; chorismate from D-erythrose 4-phosphate and phosphoenolpyruvate: step 6/7.</text>
</comment>
<comment type="subunit">
    <text evidence="1">Monomer.</text>
</comment>
<comment type="subcellular location">
    <subcellularLocation>
        <location evidence="1">Cytoplasm</location>
    </subcellularLocation>
</comment>
<comment type="similarity">
    <text evidence="1">Belongs to the EPSP synthase family.</text>
</comment>
<protein>
    <recommendedName>
        <fullName evidence="1">3-phosphoshikimate 1-carboxyvinyltransferase</fullName>
        <ecNumber evidence="1">2.5.1.19</ecNumber>
    </recommendedName>
    <alternativeName>
        <fullName evidence="1">5-enolpyruvylshikimate-3-phosphate synthase</fullName>
        <shortName evidence="1">EPSP synthase</shortName>
        <shortName evidence="1">EPSPS</shortName>
    </alternativeName>
</protein>
<keyword id="KW-0028">Amino-acid biosynthesis</keyword>
<keyword id="KW-0057">Aromatic amino acid biosynthesis</keyword>
<keyword id="KW-0963">Cytoplasm</keyword>
<keyword id="KW-1185">Reference proteome</keyword>
<keyword id="KW-0808">Transferase</keyword>
<feature type="chain" id="PRO_0000325389" description="3-phosphoshikimate 1-carboxyvinyltransferase">
    <location>
        <begin position="1"/>
        <end position="448"/>
    </location>
</feature>
<feature type="active site" description="Proton acceptor" evidence="1">
    <location>
        <position position="335"/>
    </location>
</feature>
<feature type="binding site" evidence="1">
    <location>
        <position position="38"/>
    </location>
    <ligand>
        <name>3-phosphoshikimate</name>
        <dbReference type="ChEBI" id="CHEBI:145989"/>
    </ligand>
</feature>
<feature type="binding site" evidence="1">
    <location>
        <position position="38"/>
    </location>
    <ligand>
        <name>phosphoenolpyruvate</name>
        <dbReference type="ChEBI" id="CHEBI:58702"/>
    </ligand>
</feature>
<feature type="binding site" evidence="1">
    <location>
        <position position="39"/>
    </location>
    <ligand>
        <name>3-phosphoshikimate</name>
        <dbReference type="ChEBI" id="CHEBI:145989"/>
    </ligand>
</feature>
<feature type="binding site" evidence="1">
    <location>
        <position position="43"/>
    </location>
    <ligand>
        <name>3-phosphoshikimate</name>
        <dbReference type="ChEBI" id="CHEBI:145989"/>
    </ligand>
</feature>
<feature type="binding site" evidence="1">
    <location>
        <position position="111"/>
    </location>
    <ligand>
        <name>phosphoenolpyruvate</name>
        <dbReference type="ChEBI" id="CHEBI:58702"/>
    </ligand>
</feature>
<feature type="binding site" evidence="1">
    <location>
        <position position="140"/>
    </location>
    <ligand>
        <name>phosphoenolpyruvate</name>
        <dbReference type="ChEBI" id="CHEBI:58702"/>
    </ligand>
</feature>
<feature type="binding site" evidence="1">
    <location>
        <position position="185"/>
    </location>
    <ligand>
        <name>3-phosphoshikimate</name>
        <dbReference type="ChEBI" id="CHEBI:145989"/>
    </ligand>
</feature>
<feature type="binding site" evidence="1">
    <location>
        <position position="187"/>
    </location>
    <ligand>
        <name>3-phosphoshikimate</name>
        <dbReference type="ChEBI" id="CHEBI:145989"/>
    </ligand>
</feature>
<feature type="binding site" evidence="1">
    <location>
        <position position="187"/>
    </location>
    <ligand>
        <name>phosphoenolpyruvate</name>
        <dbReference type="ChEBI" id="CHEBI:58702"/>
    </ligand>
</feature>
<feature type="binding site" evidence="1">
    <location>
        <position position="335"/>
    </location>
    <ligand>
        <name>3-phosphoshikimate</name>
        <dbReference type="ChEBI" id="CHEBI:145989"/>
    </ligand>
</feature>
<feature type="binding site" evidence="1">
    <location>
        <position position="362"/>
    </location>
    <ligand>
        <name>3-phosphoshikimate</name>
        <dbReference type="ChEBI" id="CHEBI:145989"/>
    </ligand>
</feature>
<feature type="binding site" evidence="1">
    <location>
        <position position="366"/>
    </location>
    <ligand>
        <name>phosphoenolpyruvate</name>
        <dbReference type="ChEBI" id="CHEBI:58702"/>
    </ligand>
</feature>
<feature type="binding site" evidence="1">
    <location>
        <position position="408"/>
    </location>
    <ligand>
        <name>phosphoenolpyruvate</name>
        <dbReference type="ChEBI" id="CHEBI:58702"/>
    </ligand>
</feature>
<gene>
    <name evidence="1" type="primary">aroA</name>
    <name type="ordered locus">Synpcc7942_0232</name>
</gene>